<sequence>MTRKAIYPGTFDPMTNGHLDLVTRASLMFDHVILAIAASPSKKPLFTLDERVALASQVTSHLDNVEVLGFSELMAHFAAHQNANILVRGLRAVSDFEYELQLANMNRHLMPTLESVFLMPSEEWSFISSSLVKEVARHGGDIAPFLPAVVTQALFEKLAAQ</sequence>
<feature type="chain" id="PRO_1000058169" description="Phosphopantetheine adenylyltransferase">
    <location>
        <begin position="1"/>
        <end position="161"/>
    </location>
</feature>
<feature type="binding site" evidence="1">
    <location>
        <begin position="10"/>
        <end position="11"/>
    </location>
    <ligand>
        <name>ATP</name>
        <dbReference type="ChEBI" id="CHEBI:30616"/>
    </ligand>
</feature>
<feature type="binding site" evidence="1">
    <location>
        <position position="10"/>
    </location>
    <ligand>
        <name>substrate</name>
    </ligand>
</feature>
<feature type="binding site" evidence="1">
    <location>
        <position position="18"/>
    </location>
    <ligand>
        <name>ATP</name>
        <dbReference type="ChEBI" id="CHEBI:30616"/>
    </ligand>
</feature>
<feature type="binding site" evidence="1">
    <location>
        <position position="42"/>
    </location>
    <ligand>
        <name>substrate</name>
    </ligand>
</feature>
<feature type="binding site" evidence="1">
    <location>
        <position position="74"/>
    </location>
    <ligand>
        <name>substrate</name>
    </ligand>
</feature>
<feature type="binding site" evidence="1">
    <location>
        <position position="88"/>
    </location>
    <ligand>
        <name>substrate</name>
    </ligand>
</feature>
<feature type="binding site" evidence="1">
    <location>
        <begin position="89"/>
        <end position="91"/>
    </location>
    <ligand>
        <name>ATP</name>
        <dbReference type="ChEBI" id="CHEBI:30616"/>
    </ligand>
</feature>
<feature type="binding site" evidence="1">
    <location>
        <position position="99"/>
    </location>
    <ligand>
        <name>ATP</name>
        <dbReference type="ChEBI" id="CHEBI:30616"/>
    </ligand>
</feature>
<feature type="binding site" evidence="1">
    <location>
        <begin position="124"/>
        <end position="130"/>
    </location>
    <ligand>
        <name>ATP</name>
        <dbReference type="ChEBI" id="CHEBI:30616"/>
    </ligand>
</feature>
<feature type="site" description="Transition state stabilizer" evidence="1">
    <location>
        <position position="18"/>
    </location>
</feature>
<keyword id="KW-0067">ATP-binding</keyword>
<keyword id="KW-0173">Coenzyme A biosynthesis</keyword>
<keyword id="KW-0963">Cytoplasm</keyword>
<keyword id="KW-0460">Magnesium</keyword>
<keyword id="KW-0547">Nucleotide-binding</keyword>
<keyword id="KW-0548">Nucleotidyltransferase</keyword>
<keyword id="KW-0808">Transferase</keyword>
<accession>A8GLE1</accession>
<organism>
    <name type="scientific">Serratia proteamaculans (strain 568)</name>
    <dbReference type="NCBI Taxonomy" id="399741"/>
    <lineage>
        <taxon>Bacteria</taxon>
        <taxon>Pseudomonadati</taxon>
        <taxon>Pseudomonadota</taxon>
        <taxon>Gammaproteobacteria</taxon>
        <taxon>Enterobacterales</taxon>
        <taxon>Yersiniaceae</taxon>
        <taxon>Serratia</taxon>
    </lineage>
</organism>
<reference key="1">
    <citation type="submission" date="2007-09" db="EMBL/GenBank/DDBJ databases">
        <title>Complete sequence of chromosome of Serratia proteamaculans 568.</title>
        <authorList>
            <consortium name="US DOE Joint Genome Institute"/>
            <person name="Copeland A."/>
            <person name="Lucas S."/>
            <person name="Lapidus A."/>
            <person name="Barry K."/>
            <person name="Glavina del Rio T."/>
            <person name="Dalin E."/>
            <person name="Tice H."/>
            <person name="Pitluck S."/>
            <person name="Chain P."/>
            <person name="Malfatti S."/>
            <person name="Shin M."/>
            <person name="Vergez L."/>
            <person name="Schmutz J."/>
            <person name="Larimer F."/>
            <person name="Land M."/>
            <person name="Hauser L."/>
            <person name="Kyrpides N."/>
            <person name="Kim E."/>
            <person name="Taghavi S."/>
            <person name="Newman L."/>
            <person name="Vangronsveld J."/>
            <person name="van der Lelie D."/>
            <person name="Richardson P."/>
        </authorList>
    </citation>
    <scope>NUCLEOTIDE SEQUENCE [LARGE SCALE GENOMIC DNA]</scope>
    <source>
        <strain>568</strain>
    </source>
</reference>
<dbReference type="EC" id="2.7.7.3" evidence="1"/>
<dbReference type="EMBL" id="CP000826">
    <property type="protein sequence ID" value="ABV43931.1"/>
    <property type="molecule type" value="Genomic_DNA"/>
</dbReference>
<dbReference type="SMR" id="A8GLE1"/>
<dbReference type="STRING" id="399741.Spro_4838"/>
<dbReference type="KEGG" id="spe:Spro_4838"/>
<dbReference type="eggNOG" id="COG0669">
    <property type="taxonomic scope" value="Bacteria"/>
</dbReference>
<dbReference type="HOGENOM" id="CLU_100149_0_1_6"/>
<dbReference type="OrthoDB" id="9806661at2"/>
<dbReference type="UniPathway" id="UPA00241">
    <property type="reaction ID" value="UER00355"/>
</dbReference>
<dbReference type="GO" id="GO:0005737">
    <property type="term" value="C:cytoplasm"/>
    <property type="evidence" value="ECO:0007669"/>
    <property type="project" value="UniProtKB-SubCell"/>
</dbReference>
<dbReference type="GO" id="GO:0005524">
    <property type="term" value="F:ATP binding"/>
    <property type="evidence" value="ECO:0007669"/>
    <property type="project" value="UniProtKB-KW"/>
</dbReference>
<dbReference type="GO" id="GO:0004595">
    <property type="term" value="F:pantetheine-phosphate adenylyltransferase activity"/>
    <property type="evidence" value="ECO:0007669"/>
    <property type="project" value="UniProtKB-UniRule"/>
</dbReference>
<dbReference type="GO" id="GO:0015937">
    <property type="term" value="P:coenzyme A biosynthetic process"/>
    <property type="evidence" value="ECO:0007669"/>
    <property type="project" value="UniProtKB-UniRule"/>
</dbReference>
<dbReference type="CDD" id="cd02163">
    <property type="entry name" value="PPAT"/>
    <property type="match status" value="1"/>
</dbReference>
<dbReference type="FunFam" id="3.40.50.620:FF:000012">
    <property type="entry name" value="Phosphopantetheine adenylyltransferase"/>
    <property type="match status" value="1"/>
</dbReference>
<dbReference type="Gene3D" id="3.40.50.620">
    <property type="entry name" value="HUPs"/>
    <property type="match status" value="1"/>
</dbReference>
<dbReference type="HAMAP" id="MF_00151">
    <property type="entry name" value="PPAT_bact"/>
    <property type="match status" value="1"/>
</dbReference>
<dbReference type="InterPro" id="IPR004821">
    <property type="entry name" value="Cyt_trans-like"/>
</dbReference>
<dbReference type="InterPro" id="IPR001980">
    <property type="entry name" value="PPAT"/>
</dbReference>
<dbReference type="InterPro" id="IPR014729">
    <property type="entry name" value="Rossmann-like_a/b/a_fold"/>
</dbReference>
<dbReference type="NCBIfam" id="TIGR01510">
    <property type="entry name" value="coaD_prev_kdtB"/>
    <property type="match status" value="1"/>
</dbReference>
<dbReference type="NCBIfam" id="TIGR00125">
    <property type="entry name" value="cyt_tran_rel"/>
    <property type="match status" value="1"/>
</dbReference>
<dbReference type="PANTHER" id="PTHR21342">
    <property type="entry name" value="PHOSPHOPANTETHEINE ADENYLYLTRANSFERASE"/>
    <property type="match status" value="1"/>
</dbReference>
<dbReference type="PANTHER" id="PTHR21342:SF1">
    <property type="entry name" value="PHOSPHOPANTETHEINE ADENYLYLTRANSFERASE"/>
    <property type="match status" value="1"/>
</dbReference>
<dbReference type="Pfam" id="PF01467">
    <property type="entry name" value="CTP_transf_like"/>
    <property type="match status" value="1"/>
</dbReference>
<dbReference type="PRINTS" id="PR01020">
    <property type="entry name" value="LPSBIOSNTHSS"/>
</dbReference>
<dbReference type="SUPFAM" id="SSF52374">
    <property type="entry name" value="Nucleotidylyl transferase"/>
    <property type="match status" value="1"/>
</dbReference>
<evidence type="ECO:0000255" key="1">
    <source>
        <dbReference type="HAMAP-Rule" id="MF_00151"/>
    </source>
</evidence>
<comment type="function">
    <text evidence="1">Reversibly transfers an adenylyl group from ATP to 4'-phosphopantetheine, yielding dephospho-CoA (dPCoA) and pyrophosphate.</text>
</comment>
<comment type="catalytic activity">
    <reaction evidence="1">
        <text>(R)-4'-phosphopantetheine + ATP + H(+) = 3'-dephospho-CoA + diphosphate</text>
        <dbReference type="Rhea" id="RHEA:19801"/>
        <dbReference type="ChEBI" id="CHEBI:15378"/>
        <dbReference type="ChEBI" id="CHEBI:30616"/>
        <dbReference type="ChEBI" id="CHEBI:33019"/>
        <dbReference type="ChEBI" id="CHEBI:57328"/>
        <dbReference type="ChEBI" id="CHEBI:61723"/>
        <dbReference type="EC" id="2.7.7.3"/>
    </reaction>
</comment>
<comment type="cofactor">
    <cofactor evidence="1">
        <name>Mg(2+)</name>
        <dbReference type="ChEBI" id="CHEBI:18420"/>
    </cofactor>
</comment>
<comment type="pathway">
    <text evidence="1">Cofactor biosynthesis; coenzyme A biosynthesis; CoA from (R)-pantothenate: step 4/5.</text>
</comment>
<comment type="subunit">
    <text evidence="1">Homohexamer.</text>
</comment>
<comment type="subcellular location">
    <subcellularLocation>
        <location evidence="1">Cytoplasm</location>
    </subcellularLocation>
</comment>
<comment type="similarity">
    <text evidence="1">Belongs to the bacterial CoaD family.</text>
</comment>
<proteinExistence type="inferred from homology"/>
<gene>
    <name evidence="1" type="primary">coaD</name>
    <name type="ordered locus">Spro_4838</name>
</gene>
<name>COAD_SERP5</name>
<protein>
    <recommendedName>
        <fullName evidence="1">Phosphopantetheine adenylyltransferase</fullName>
        <ecNumber evidence="1">2.7.7.3</ecNumber>
    </recommendedName>
    <alternativeName>
        <fullName evidence="1">Dephospho-CoA pyrophosphorylase</fullName>
    </alternativeName>
    <alternativeName>
        <fullName evidence="1">Pantetheine-phosphate adenylyltransferase</fullName>
        <shortName evidence="1">PPAT</shortName>
    </alternativeName>
</protein>